<sequence>MESMSELAPRCLLFPLLLLLPLLLLPAPKLGPSPAGAEETDWVRLPSKCEVCKYVAVELKSAFEETGKTKEVIDTGYGILDGKGSGVKYTKSDLRLIEVTETICKRLLDYSLHKERTGSNRFAKGMSETFETLHNLVHKGVKVVMDIPYELWNETSAEVADLKKQCDVLVEEFEEVIEDWYRNHQEEDLTEFLCANHVLKGKDTSCLAERWSGKKGDIASLGGKKSKKKRSGVKGSSSGSSKQRKELGGLGEDANAEEEEGVQKASPLPHSPPDEL</sequence>
<accession>Q9DAU1</accession>
<accession>Q571I0</accession>
<accession>Q8BUS5</accession>
<accession>Q8BUV5</accession>
<accession>Q8C0C5</accession>
<protein>
    <recommendedName>
        <fullName>Protein canopy homolog 3</fullName>
    </recommendedName>
    <alternativeName>
        <fullName>Protein associated with Tlr4</fullName>
    </alternativeName>
    <alternativeName>
        <fullName>Trinucleotide repeat-containing gene 5 protein</fullName>
    </alternativeName>
</protein>
<organism>
    <name type="scientific">Mus musculus</name>
    <name type="common">Mouse</name>
    <dbReference type="NCBI Taxonomy" id="10090"/>
    <lineage>
        <taxon>Eukaryota</taxon>
        <taxon>Metazoa</taxon>
        <taxon>Chordata</taxon>
        <taxon>Craniata</taxon>
        <taxon>Vertebrata</taxon>
        <taxon>Euteleostomi</taxon>
        <taxon>Mammalia</taxon>
        <taxon>Eutheria</taxon>
        <taxon>Euarchontoglires</taxon>
        <taxon>Glires</taxon>
        <taxon>Rodentia</taxon>
        <taxon>Myomorpha</taxon>
        <taxon>Muroidea</taxon>
        <taxon>Muridae</taxon>
        <taxon>Murinae</taxon>
        <taxon>Mus</taxon>
        <taxon>Mus</taxon>
    </lineage>
</organism>
<keyword id="KW-0025">Alternative splicing</keyword>
<keyword id="KW-0143">Chaperone</keyword>
<keyword id="KW-0175">Coiled coil</keyword>
<keyword id="KW-1015">Disulfide bond</keyword>
<keyword id="KW-0256">Endoplasmic reticulum</keyword>
<keyword id="KW-0325">Glycoprotein</keyword>
<keyword id="KW-0391">Immunity</keyword>
<keyword id="KW-0399">Innate immunity</keyword>
<keyword id="KW-1185">Reference proteome</keyword>
<keyword id="KW-0732">Signal</keyword>
<name>CNPY3_MOUSE</name>
<comment type="function">
    <text evidence="5 6 8">Toll-like receptor (TLR)-specific co-chaperone for HSP90B1. Required for proper TLR folding, except that of TLR3, and hence controls TLR exit from the endoplasmic reticulum. Consequently, required for both innate and adaptive immune responses.</text>
</comment>
<comment type="subunit">
    <text evidence="4 5 6 7 8">Interacts with HSP90B1; this interaction is disrupted in the presence of ATP. Interacts with TLR1, TLR2, TLR4 and TLR9. Strongest interaction with TLR4.</text>
</comment>
<comment type="subcellular location">
    <subcellularLocation>
        <location evidence="6 8">Endoplasmic reticulum</location>
    </subcellularLocation>
</comment>
<comment type="alternative products">
    <event type="alternative splicing"/>
    <isoform>
        <id>Q9DAU1-1</id>
        <name>1</name>
        <sequence type="displayed"/>
    </isoform>
    <isoform>
        <id>Q9DAU1-2</id>
        <name>2</name>
        <sequence type="described" ref="VSP_030134"/>
    </isoform>
</comment>
<comment type="disruption phenotype">
    <text evidence="6 9">The birth rate of knockout mice on a C57BL/6 background is very low (approximately 10% of pups). The animals appear normal, but their growth after birth is severely retarded. Half of them die by the end of the weaning period. Mutant mice have profoundly impaired T-helper type 1 lymphocyte (Th1)-mediated responses (PubMed:17998391). On a BALB/c background, under resting conditions, they show spastic or dystonic features and, during the open field test, they exhibit hyperactivity and anxiety. Their resting electroencephalography show enhanced activity in the fast beta frequency band (20-35 Hz). They do not show any apparent structural brain anomaly (PubMed:29394991).</text>
</comment>
<comment type="similarity">
    <text evidence="11">Belongs to the canopy family.</text>
</comment>
<reference key="1">
    <citation type="journal article" date="2003" name="Mol. Endocrinol.">
        <title>Trapping and characterization of novel retinoid response elements.</title>
        <authorList>
            <person name="Glozak M.A."/>
            <person name="Li Y."/>
            <person name="Reuille R."/>
            <person name="Kim K.H."/>
            <person name="Vo M.N."/>
            <person name="Rogers M.B."/>
        </authorList>
    </citation>
    <scope>NUCLEOTIDE SEQUENCE [MRNA] (ISOFORM 1)</scope>
    <source>
        <tissue>Embryonic carcinoma</tissue>
    </source>
</reference>
<reference key="2">
    <citation type="journal article" date="2005" name="Science">
        <title>The transcriptional landscape of the mammalian genome.</title>
        <authorList>
            <person name="Carninci P."/>
            <person name="Kasukawa T."/>
            <person name="Katayama S."/>
            <person name="Gough J."/>
            <person name="Frith M.C."/>
            <person name="Maeda N."/>
            <person name="Oyama R."/>
            <person name="Ravasi T."/>
            <person name="Lenhard B."/>
            <person name="Wells C."/>
            <person name="Kodzius R."/>
            <person name="Shimokawa K."/>
            <person name="Bajic V.B."/>
            <person name="Brenner S.E."/>
            <person name="Batalov S."/>
            <person name="Forrest A.R."/>
            <person name="Zavolan M."/>
            <person name="Davis M.J."/>
            <person name="Wilming L.G."/>
            <person name="Aidinis V."/>
            <person name="Allen J.E."/>
            <person name="Ambesi-Impiombato A."/>
            <person name="Apweiler R."/>
            <person name="Aturaliya R.N."/>
            <person name="Bailey T.L."/>
            <person name="Bansal M."/>
            <person name="Baxter L."/>
            <person name="Beisel K.W."/>
            <person name="Bersano T."/>
            <person name="Bono H."/>
            <person name="Chalk A.M."/>
            <person name="Chiu K.P."/>
            <person name="Choudhary V."/>
            <person name="Christoffels A."/>
            <person name="Clutterbuck D.R."/>
            <person name="Crowe M.L."/>
            <person name="Dalla E."/>
            <person name="Dalrymple B.P."/>
            <person name="de Bono B."/>
            <person name="Della Gatta G."/>
            <person name="di Bernardo D."/>
            <person name="Down T."/>
            <person name="Engstrom P."/>
            <person name="Fagiolini M."/>
            <person name="Faulkner G."/>
            <person name="Fletcher C.F."/>
            <person name="Fukushima T."/>
            <person name="Furuno M."/>
            <person name="Futaki S."/>
            <person name="Gariboldi M."/>
            <person name="Georgii-Hemming P."/>
            <person name="Gingeras T.R."/>
            <person name="Gojobori T."/>
            <person name="Green R.E."/>
            <person name="Gustincich S."/>
            <person name="Harbers M."/>
            <person name="Hayashi Y."/>
            <person name="Hensch T.K."/>
            <person name="Hirokawa N."/>
            <person name="Hill D."/>
            <person name="Huminiecki L."/>
            <person name="Iacono M."/>
            <person name="Ikeo K."/>
            <person name="Iwama A."/>
            <person name="Ishikawa T."/>
            <person name="Jakt M."/>
            <person name="Kanapin A."/>
            <person name="Katoh M."/>
            <person name="Kawasawa Y."/>
            <person name="Kelso J."/>
            <person name="Kitamura H."/>
            <person name="Kitano H."/>
            <person name="Kollias G."/>
            <person name="Krishnan S.P."/>
            <person name="Kruger A."/>
            <person name="Kummerfeld S.K."/>
            <person name="Kurochkin I.V."/>
            <person name="Lareau L.F."/>
            <person name="Lazarevic D."/>
            <person name="Lipovich L."/>
            <person name="Liu J."/>
            <person name="Liuni S."/>
            <person name="McWilliam S."/>
            <person name="Madan Babu M."/>
            <person name="Madera M."/>
            <person name="Marchionni L."/>
            <person name="Matsuda H."/>
            <person name="Matsuzawa S."/>
            <person name="Miki H."/>
            <person name="Mignone F."/>
            <person name="Miyake S."/>
            <person name="Morris K."/>
            <person name="Mottagui-Tabar S."/>
            <person name="Mulder N."/>
            <person name="Nakano N."/>
            <person name="Nakauchi H."/>
            <person name="Ng P."/>
            <person name="Nilsson R."/>
            <person name="Nishiguchi S."/>
            <person name="Nishikawa S."/>
            <person name="Nori F."/>
            <person name="Ohara O."/>
            <person name="Okazaki Y."/>
            <person name="Orlando V."/>
            <person name="Pang K.C."/>
            <person name="Pavan W.J."/>
            <person name="Pavesi G."/>
            <person name="Pesole G."/>
            <person name="Petrovsky N."/>
            <person name="Piazza S."/>
            <person name="Reed J."/>
            <person name="Reid J.F."/>
            <person name="Ring B.Z."/>
            <person name="Ringwald M."/>
            <person name="Rost B."/>
            <person name="Ruan Y."/>
            <person name="Salzberg S.L."/>
            <person name="Sandelin A."/>
            <person name="Schneider C."/>
            <person name="Schoenbach C."/>
            <person name="Sekiguchi K."/>
            <person name="Semple C.A."/>
            <person name="Seno S."/>
            <person name="Sessa L."/>
            <person name="Sheng Y."/>
            <person name="Shibata Y."/>
            <person name="Shimada H."/>
            <person name="Shimada K."/>
            <person name="Silva D."/>
            <person name="Sinclair B."/>
            <person name="Sperling S."/>
            <person name="Stupka E."/>
            <person name="Sugiura K."/>
            <person name="Sultana R."/>
            <person name="Takenaka Y."/>
            <person name="Taki K."/>
            <person name="Tammoja K."/>
            <person name="Tan S.L."/>
            <person name="Tang S."/>
            <person name="Taylor M.S."/>
            <person name="Tegner J."/>
            <person name="Teichmann S.A."/>
            <person name="Ueda H.R."/>
            <person name="van Nimwegen E."/>
            <person name="Verardo R."/>
            <person name="Wei C.L."/>
            <person name="Yagi K."/>
            <person name="Yamanishi H."/>
            <person name="Zabarovsky E."/>
            <person name="Zhu S."/>
            <person name="Zimmer A."/>
            <person name="Hide W."/>
            <person name="Bult C."/>
            <person name="Grimmond S.M."/>
            <person name="Teasdale R.D."/>
            <person name="Liu E.T."/>
            <person name="Brusic V."/>
            <person name="Quackenbush J."/>
            <person name="Wahlestedt C."/>
            <person name="Mattick J.S."/>
            <person name="Hume D.A."/>
            <person name="Kai C."/>
            <person name="Sasaki D."/>
            <person name="Tomaru Y."/>
            <person name="Fukuda S."/>
            <person name="Kanamori-Katayama M."/>
            <person name="Suzuki M."/>
            <person name="Aoki J."/>
            <person name="Arakawa T."/>
            <person name="Iida J."/>
            <person name="Imamura K."/>
            <person name="Itoh M."/>
            <person name="Kato T."/>
            <person name="Kawaji H."/>
            <person name="Kawagashira N."/>
            <person name="Kawashima T."/>
            <person name="Kojima M."/>
            <person name="Kondo S."/>
            <person name="Konno H."/>
            <person name="Nakano K."/>
            <person name="Ninomiya N."/>
            <person name="Nishio T."/>
            <person name="Okada M."/>
            <person name="Plessy C."/>
            <person name="Shibata K."/>
            <person name="Shiraki T."/>
            <person name="Suzuki S."/>
            <person name="Tagami M."/>
            <person name="Waki K."/>
            <person name="Watahiki A."/>
            <person name="Okamura-Oho Y."/>
            <person name="Suzuki H."/>
            <person name="Kawai J."/>
            <person name="Hayashizaki Y."/>
        </authorList>
    </citation>
    <scope>NUCLEOTIDE SEQUENCE [LARGE SCALE MRNA] (ISOFORMS 1 AND 2)</scope>
    <source>
        <strain>C57BL/6J</strain>
        <tissue>Cerebellum</tissue>
        <tissue>Embryonic stem cell</tissue>
        <tissue>Fetal head</tissue>
        <tissue>Kidney</tissue>
        <tissue>Lung</tissue>
        <tissue>Ovary</tissue>
        <tissue>Placenta</tissue>
    </source>
</reference>
<reference key="3">
    <citation type="journal article" date="2004" name="Genome Res.">
        <title>The status, quality, and expansion of the NIH full-length cDNA project: the Mammalian Gene Collection (MGC).</title>
        <authorList>
            <consortium name="The MGC Project Team"/>
        </authorList>
    </citation>
    <scope>NUCLEOTIDE SEQUENCE [LARGE SCALE MRNA] (ISOFORM 1)</scope>
    <source>
        <strain>FVB/N</strain>
        <tissue>Kidney</tissue>
    </source>
</reference>
<reference key="4">
    <citation type="journal article" date="2004" name="DNA Res.">
        <title>Prediction of the coding sequences of mouse homologues of FLJ genes: the complete nucleotide sequences of 110 mouse FLJ-homologous cDNAs identified by screening of terminal sequences of cDNA clones randomly sampled from size-fractionated libraries.</title>
        <authorList>
            <person name="Okazaki N."/>
            <person name="Kikuno R."/>
            <person name="Ohara R."/>
            <person name="Inamoto S."/>
            <person name="Koseki H."/>
            <person name="Hiraoka S."/>
            <person name="Saga Y."/>
            <person name="Kitamura H."/>
            <person name="Nakagawa T."/>
            <person name="Nagase T."/>
            <person name="Ohara O."/>
            <person name="Koga H."/>
        </authorList>
    </citation>
    <scope>NUCLEOTIDE SEQUENCE [LARGE SCALE MRNA] OF 35-276 (ISOFORM 1)</scope>
    <source>
        <tissue>Spleen</tissue>
    </source>
</reference>
<reference key="5">
    <citation type="journal article" date="2006" name="Biochem. Biophys. Res. Commun.">
        <title>A molecule that is associated with Toll-like receptor 4 and regulates its cell surface expression.</title>
        <authorList>
            <person name="Konno K."/>
            <person name="Wakabayashi Y."/>
            <person name="Akashi-Takamura S."/>
            <person name="Ishii T."/>
            <person name="Kobayashi M."/>
            <person name="Takahashi K."/>
            <person name="Kusumoto Y."/>
            <person name="Saitoh S."/>
            <person name="Yoshizawa Y."/>
            <person name="Miyake K."/>
        </authorList>
    </citation>
    <scope>INTERACTION WITH TLR4</scope>
</reference>
<reference key="6">
    <citation type="journal article" date="2006" name="J. Immunol.">
        <title>A protein associated with toll-like receptor 4 (PRAT4A) regulates cell surface expression of TLR4.</title>
        <authorList>
            <person name="Wakabayashi Y."/>
            <person name="Kobayashi M."/>
            <person name="Akashi-Takamura S."/>
            <person name="Tanimura N."/>
            <person name="Konno K."/>
            <person name="Takahashi K."/>
            <person name="Ishii T."/>
            <person name="Mizutani T."/>
            <person name="Iba H."/>
            <person name="Kouro T."/>
            <person name="Takaki S."/>
            <person name="Takatsu K."/>
            <person name="Oda Y."/>
            <person name="Ishihama Y."/>
            <person name="Saitoh S."/>
            <person name="Miyake K."/>
        </authorList>
    </citation>
    <scope>FUNCTION</scope>
    <scope>INTERACTION WITH TLR4</scope>
</reference>
<reference key="7">
    <citation type="journal article" date="2007" name="J. Exp. Med.">
        <title>A protein associated with Toll-like receptor (TLR) 4 (PRAT4A) is required for TLR-dependent immune responses.</title>
        <authorList>
            <person name="Takahashi K."/>
            <person name="Shibata T."/>
            <person name="Akashi-Takamura S."/>
            <person name="Kiyokawa T."/>
            <person name="Wakabayashi Y."/>
            <person name="Tanimura N."/>
            <person name="Kobayashi T."/>
            <person name="Matsumoto F."/>
            <person name="Fukui R."/>
            <person name="Kouro T."/>
            <person name="Nagai Y."/>
            <person name="Takatsu K."/>
            <person name="Saitoh S."/>
            <person name="Miyake K."/>
        </authorList>
    </citation>
    <scope>FUNCTION</scope>
    <scope>INTERACTION WITH TLR1 AND TLR9</scope>
    <scope>SUBCELLULAR LOCATION</scope>
    <scope>DISRUPTION PHENOTYPE</scope>
</reference>
<reference key="8">
    <citation type="journal article" date="2008" name="Int. Immunol.">
        <title>A single base mutation in the PRAT4A gene reveals differential interaction of PRAT4A with Toll-like receptors.</title>
        <authorList>
            <person name="Kiyokawa T."/>
            <person name="Akashi-Takamura S."/>
            <person name="Shibata T."/>
            <person name="Matsumoto F."/>
            <person name="Nishitani C."/>
            <person name="Kuroki Y."/>
            <person name="Seto Y."/>
            <person name="Miyake K."/>
        </authorList>
    </citation>
    <scope>INTERACTION WITH TLR2; TLR4 AND TLR9</scope>
    <scope>MUTAGENESIS OF ARG-95; MET-145 AND SER-231</scope>
</reference>
<reference key="9">
    <citation type="journal article" date="2010" name="Cell">
        <title>A tissue-specific atlas of mouse protein phosphorylation and expression.</title>
        <authorList>
            <person name="Huttlin E.L."/>
            <person name="Jedrychowski M.P."/>
            <person name="Elias J.E."/>
            <person name="Goswami T."/>
            <person name="Rad R."/>
            <person name="Beausoleil S.A."/>
            <person name="Villen J."/>
            <person name="Haas W."/>
            <person name="Sowa M.E."/>
            <person name="Gygi S.P."/>
        </authorList>
    </citation>
    <scope>IDENTIFICATION BY MASS SPECTROMETRY [LARGE SCALE ANALYSIS]</scope>
    <source>
        <tissue>Brain</tissue>
        <tissue>Brown adipose tissue</tissue>
        <tissue>Heart</tissue>
        <tissue>Kidney</tissue>
        <tissue>Liver</tissue>
        <tissue>Lung</tissue>
        <tissue>Pancreas</tissue>
        <tissue>Spleen</tissue>
        <tissue>Testis</tissue>
    </source>
</reference>
<reference key="10">
    <citation type="journal article" date="2010" name="Nat. Commun.">
        <title>Folding of Toll-like receptors by the HSP90 paralogue gp96 requires a substrate-specific cochaperone.</title>
        <authorList>
            <person name="Liu B."/>
            <person name="Yang Y."/>
            <person name="Qiu Z."/>
            <person name="Staron M."/>
            <person name="Hong F."/>
            <person name="Li Y."/>
            <person name="Wu S."/>
            <person name="Li Y."/>
            <person name="Hao B."/>
            <person name="Bona R."/>
            <person name="Han D."/>
            <person name="Li Z."/>
        </authorList>
    </citation>
    <scope>FUNCTION</scope>
    <scope>INTERACTION WITH HSP90B1 AND TLR9</scope>
    <scope>SUBCELLULAR LOCATION</scope>
    <scope>MUTAGENESIS OF MET-145</scope>
</reference>
<reference key="11">
    <citation type="journal article" date="2012" name="Nat. Commun.">
        <authorList>
            <person name="Liu B."/>
            <person name="Yang Y."/>
            <person name="Qiu Z."/>
            <person name="Staron M."/>
            <person name="Hong F."/>
            <person name="Li Y."/>
            <person name="Wu S."/>
            <person name="Li Y."/>
            <person name="Hao B."/>
            <person name="Bona R."/>
            <person name="Han D."/>
            <person name="Li Z."/>
        </authorList>
    </citation>
    <scope>ERRATUM OF PUBMED:20865800</scope>
</reference>
<reference key="12">
    <citation type="journal article" date="2018" name="Am. J. Hum. Genet.">
        <title>Biallelic Variants in CNPY3, Encoding an Endoplasmic Reticulum Chaperone, Cause Early-Onset Epileptic Encephalopathy.</title>
        <authorList>
            <person name="Mutoh H."/>
            <person name="Kato M."/>
            <person name="Akita T."/>
            <person name="Shibata T."/>
            <person name="Wakamoto H."/>
            <person name="Ikeda H."/>
            <person name="Kitaura H."/>
            <person name="Aoto K."/>
            <person name="Nakashima M."/>
            <person name="Wang T."/>
            <person name="Ohba C."/>
            <person name="Miyatake S."/>
            <person name="Miyake N."/>
            <person name="Kakita A."/>
            <person name="Miyake K."/>
            <person name="Fukuda A."/>
            <person name="Matsumoto N."/>
            <person name="Saitsu H."/>
        </authorList>
    </citation>
    <scope>DISRUPTION PHENOTYPE</scope>
</reference>
<proteinExistence type="evidence at protein level"/>
<gene>
    <name type="primary">Cnpy3</name>
    <name type="synonym">Prat4a</name>
    <name type="synonym">Tnrc5</name>
</gene>
<dbReference type="EMBL" id="AF361644">
    <property type="protein sequence ID" value="AAK52494.1"/>
    <property type="molecule type" value="mRNA"/>
</dbReference>
<dbReference type="EMBL" id="AK005532">
    <property type="protein sequence ID" value="BAB24103.1"/>
    <property type="molecule type" value="mRNA"/>
</dbReference>
<dbReference type="EMBL" id="AK031742">
    <property type="protein sequence ID" value="BAC27534.1"/>
    <property type="molecule type" value="mRNA"/>
</dbReference>
<dbReference type="EMBL" id="AK049358">
    <property type="protein sequence ID" value="BAC33707.1"/>
    <property type="molecule type" value="mRNA"/>
</dbReference>
<dbReference type="EMBL" id="AK082340">
    <property type="protein sequence ID" value="BAC38471.1"/>
    <property type="molecule type" value="mRNA"/>
</dbReference>
<dbReference type="EMBL" id="AK082749">
    <property type="protein sequence ID" value="BAC38599.1"/>
    <property type="molecule type" value="mRNA"/>
</dbReference>
<dbReference type="EMBL" id="AK085617">
    <property type="protein sequence ID" value="BAC39489.1"/>
    <property type="molecule type" value="mRNA"/>
</dbReference>
<dbReference type="EMBL" id="AK086940">
    <property type="protein sequence ID" value="BAC39769.1"/>
    <property type="molecule type" value="mRNA"/>
</dbReference>
<dbReference type="EMBL" id="AK143428">
    <property type="protein sequence ID" value="BAE25373.1"/>
    <property type="molecule type" value="mRNA"/>
</dbReference>
<dbReference type="EMBL" id="BC013549">
    <property type="protein sequence ID" value="AAH13549.1"/>
    <property type="molecule type" value="mRNA"/>
</dbReference>
<dbReference type="EMBL" id="AK220209">
    <property type="protein sequence ID" value="BAD90134.1"/>
    <property type="molecule type" value="mRNA"/>
</dbReference>
<dbReference type="CCDS" id="CCDS28839.1">
    <molecule id="Q9DAU1-1"/>
</dbReference>
<dbReference type="RefSeq" id="NP_001292917.1">
    <property type="nucleotide sequence ID" value="NM_001305988.1"/>
</dbReference>
<dbReference type="RefSeq" id="NP_001292918.1">
    <molecule id="Q9DAU1-2"/>
    <property type="nucleotide sequence ID" value="NM_001305989.1"/>
</dbReference>
<dbReference type="RefSeq" id="NP_001292919.1">
    <molecule id="Q9DAU1-2"/>
    <property type="nucleotide sequence ID" value="NM_001305990.1"/>
</dbReference>
<dbReference type="RefSeq" id="NP_082341.1">
    <molecule id="Q9DAU1-1"/>
    <property type="nucleotide sequence ID" value="NM_028065.4"/>
</dbReference>
<dbReference type="RefSeq" id="XP_017173143.1">
    <property type="nucleotide sequence ID" value="XM_017317654.1"/>
</dbReference>
<dbReference type="RefSeq" id="XP_030105920.1">
    <molecule id="Q9DAU1-2"/>
    <property type="nucleotide sequence ID" value="XM_030250060.1"/>
</dbReference>
<dbReference type="CORUM" id="Q9DAU1"/>
<dbReference type="FunCoup" id="Q9DAU1">
    <property type="interactions" value="1049"/>
</dbReference>
<dbReference type="STRING" id="10090.ENSMUSP00000050309"/>
<dbReference type="GlyConnect" id="2619">
    <property type="glycosylation" value="3 N-Linked glycans (1 site)"/>
</dbReference>
<dbReference type="GlyCosmos" id="Q9DAU1">
    <property type="glycosylation" value="1 site, 3 glycans"/>
</dbReference>
<dbReference type="GlyGen" id="Q9DAU1">
    <property type="glycosylation" value="2 sites, 4 N-linked glycans (1 site), 1 O-linked glycan (1 site)"/>
</dbReference>
<dbReference type="iPTMnet" id="Q9DAU1"/>
<dbReference type="PhosphoSitePlus" id="Q9DAU1"/>
<dbReference type="SwissPalm" id="Q9DAU1"/>
<dbReference type="jPOST" id="Q9DAU1"/>
<dbReference type="PaxDb" id="10090-ENSMUSP00000050309"/>
<dbReference type="PeptideAtlas" id="Q9DAU1"/>
<dbReference type="ProteomicsDB" id="283656">
    <molecule id="Q9DAU1-1"/>
</dbReference>
<dbReference type="ProteomicsDB" id="283657">
    <molecule id="Q9DAU1-2"/>
</dbReference>
<dbReference type="Pumba" id="Q9DAU1"/>
<dbReference type="Antibodypedia" id="16108">
    <property type="antibodies" value="178 antibodies from 30 providers"/>
</dbReference>
<dbReference type="DNASU" id="72029"/>
<dbReference type="Ensembl" id="ENSMUST00000059844.13">
    <molecule id="Q9DAU1-1"/>
    <property type="protein sequence ID" value="ENSMUSP00000050309.7"/>
    <property type="gene ID" value="ENSMUSG00000023973.14"/>
</dbReference>
<dbReference type="GeneID" id="72029"/>
<dbReference type="KEGG" id="mmu:72029"/>
<dbReference type="UCSC" id="uc008cuf.2">
    <molecule id="Q9DAU1-1"/>
    <property type="organism name" value="mouse"/>
</dbReference>
<dbReference type="AGR" id="MGI:1919279"/>
<dbReference type="CTD" id="10695"/>
<dbReference type="MGI" id="MGI:1919279">
    <property type="gene designation" value="Cnpy3"/>
</dbReference>
<dbReference type="VEuPathDB" id="HostDB:ENSMUSG00000023973"/>
<dbReference type="eggNOG" id="KOG4052">
    <property type="taxonomic scope" value="Eukaryota"/>
</dbReference>
<dbReference type="GeneTree" id="ENSGT00390000014072"/>
<dbReference type="HOGENOM" id="CLU_078068_0_0_1"/>
<dbReference type="InParanoid" id="Q9DAU1"/>
<dbReference type="OMA" id="GQDKACL"/>
<dbReference type="OrthoDB" id="6020060at2759"/>
<dbReference type="PhylomeDB" id="Q9DAU1"/>
<dbReference type="TreeFam" id="TF318951"/>
<dbReference type="Reactome" id="R-MMU-1679131">
    <property type="pathway name" value="Trafficking and processing of endosomal TLR"/>
</dbReference>
<dbReference type="BioGRID-ORCS" id="72029">
    <property type="hits" value="3 hits in 61 CRISPR screens"/>
</dbReference>
<dbReference type="ChiTaRS" id="Cnpy3">
    <property type="organism name" value="mouse"/>
</dbReference>
<dbReference type="PRO" id="PR:Q9DAU1"/>
<dbReference type="Proteomes" id="UP000000589">
    <property type="component" value="Chromosome 17"/>
</dbReference>
<dbReference type="RNAct" id="Q9DAU1">
    <property type="molecule type" value="protein"/>
</dbReference>
<dbReference type="Bgee" id="ENSMUSG00000023973">
    <property type="expression patterns" value="Expressed in humerus cartilage element and 238 other cell types or tissues"/>
</dbReference>
<dbReference type="ExpressionAtlas" id="Q9DAU1">
    <property type="expression patterns" value="baseline and differential"/>
</dbReference>
<dbReference type="GO" id="GO:0005783">
    <property type="term" value="C:endoplasmic reticulum"/>
    <property type="evidence" value="ECO:0007669"/>
    <property type="project" value="UniProtKB-SubCell"/>
</dbReference>
<dbReference type="GO" id="GO:0005102">
    <property type="term" value="F:signaling receptor binding"/>
    <property type="evidence" value="ECO:0000353"/>
    <property type="project" value="MGI"/>
</dbReference>
<dbReference type="GO" id="GO:0045087">
    <property type="term" value="P:innate immune response"/>
    <property type="evidence" value="ECO:0007669"/>
    <property type="project" value="UniProtKB-KW"/>
</dbReference>
<dbReference type="InterPro" id="IPR021852">
    <property type="entry name" value="DUF3456"/>
</dbReference>
<dbReference type="PANTHER" id="PTHR15382">
    <property type="entry name" value="CTG4A-RELATED"/>
    <property type="match status" value="1"/>
</dbReference>
<dbReference type="PANTHER" id="PTHR15382:SF2">
    <property type="entry name" value="PROTEIN CANOPY HOMOLOG 3"/>
    <property type="match status" value="1"/>
</dbReference>
<dbReference type="Pfam" id="PF11938">
    <property type="entry name" value="DUF3456"/>
    <property type="match status" value="1"/>
</dbReference>
<evidence type="ECO:0000250" key="1"/>
<evidence type="ECO:0000255" key="2"/>
<evidence type="ECO:0000256" key="3">
    <source>
        <dbReference type="SAM" id="MobiDB-lite"/>
    </source>
</evidence>
<evidence type="ECO:0000269" key="4">
    <source>
    </source>
</evidence>
<evidence type="ECO:0000269" key="5">
    <source>
    </source>
</evidence>
<evidence type="ECO:0000269" key="6">
    <source>
    </source>
</evidence>
<evidence type="ECO:0000269" key="7">
    <source>
    </source>
</evidence>
<evidence type="ECO:0000269" key="8">
    <source>
    </source>
</evidence>
<evidence type="ECO:0000269" key="9">
    <source>
    </source>
</evidence>
<evidence type="ECO:0000303" key="10">
    <source>
    </source>
</evidence>
<evidence type="ECO:0000305" key="11"/>
<feature type="signal peptide" evidence="2">
    <location>
        <begin position="1"/>
        <end position="26"/>
    </location>
</feature>
<feature type="chain" id="PRO_0000313781" description="Protein canopy homolog 3">
    <location>
        <begin position="27"/>
        <end position="276"/>
    </location>
</feature>
<feature type="domain" description="Saposin B-type">
    <location>
        <begin position="47"/>
        <end position="269"/>
    </location>
</feature>
<feature type="region of interest" description="Disordered" evidence="3">
    <location>
        <begin position="218"/>
        <end position="276"/>
    </location>
</feature>
<feature type="coiled-coil region" evidence="2">
    <location>
        <begin position="153"/>
        <end position="179"/>
    </location>
</feature>
<feature type="glycosylation site" description="N-linked (GlcNAc...) asparagine" evidence="2">
    <location>
        <position position="153"/>
    </location>
</feature>
<feature type="disulfide bond" evidence="1">
    <location>
        <begin position="49"/>
        <end position="206"/>
    </location>
</feature>
<feature type="disulfide bond" evidence="1">
    <location>
        <begin position="52"/>
        <end position="194"/>
    </location>
</feature>
<feature type="disulfide bond" evidence="1">
    <location>
        <begin position="104"/>
        <end position="166"/>
    </location>
</feature>
<feature type="splice variant" id="VSP_030134" description="In isoform 2." evidence="10">
    <location>
        <begin position="1"/>
        <end position="125"/>
    </location>
</feature>
<feature type="mutagenesis site" description="Does not affect association with TLR2, TLR4 and TLR9; does not affect cell-surface expression of TLR2, TLR4 and TLR9; does not affect responses of TLR2, TLR4 and TLR9." evidence="7">
    <original>R</original>
    <variation>L</variation>
    <location>
        <position position="95"/>
    </location>
</feature>
<feature type="mutagenesis site" description="Loss of HSP90B1-binding. Impairs association with TLR2 and TLR4; does not impair association with TLR9; partially affects responses of TLR2 and TLR4; affects responses of TLR9; does not affect cell-surface expression of TLR2; affects cell-surface expression of TLR4 and TLR9." evidence="7 8">
    <original>M</original>
    <variation>K</variation>
    <location>
        <position position="145"/>
    </location>
</feature>
<feature type="mutagenesis site" description="Does not affect association with TLR2, TLR4 and TLR9; does not affect cell-surface expression of TLR2, TLR4 and TLR9; does not affect responses of TLR2, TLR4 and TLR9." evidence="7">
    <original>S</original>
    <variation>I</variation>
    <location>
        <position position="231"/>
    </location>
</feature>
<feature type="sequence conflict" description="In Ref. 4; BAD90134." evidence="11" ref="4">
    <original>A</original>
    <variation>AE</variation>
    <location>
        <position position="256"/>
    </location>
</feature>